<accession>B5YUX6</accession>
<proteinExistence type="inferred from homology"/>
<keyword id="KW-0143">Chaperone</keyword>
<keyword id="KW-0963">Cytoplasm</keyword>
<keyword id="KW-0342">GTP-binding</keyword>
<keyword id="KW-0996">Nickel insertion</keyword>
<keyword id="KW-0547">Nucleotide-binding</keyword>
<name>UREG_ECO5E</name>
<protein>
    <recommendedName>
        <fullName evidence="1">Urease accessory protein UreG</fullName>
    </recommendedName>
</protein>
<gene>
    <name evidence="1" type="primary">ureG</name>
    <name type="ordered locus">ECH74115_1326</name>
</gene>
<organism>
    <name type="scientific">Escherichia coli O157:H7 (strain EC4115 / EHEC)</name>
    <dbReference type="NCBI Taxonomy" id="444450"/>
    <lineage>
        <taxon>Bacteria</taxon>
        <taxon>Pseudomonadati</taxon>
        <taxon>Pseudomonadota</taxon>
        <taxon>Gammaproteobacteria</taxon>
        <taxon>Enterobacterales</taxon>
        <taxon>Enterobacteriaceae</taxon>
        <taxon>Escherichia</taxon>
    </lineage>
</organism>
<sequence>MNIIKQPLRVGVGGPVGSGKTALLEALCKSMRDTWQLAVVTNDIYTREDQRILTEAGALEAERIVGVETGGCPHTAIREDASMNLAAVEALSEKFGNLELIFVESGGDNLSATFSPELADLTIYVIDVAEGEKIPRKGGPGITKSDFLVINKTDLAPYVGASLEVMERDTLRMRGERPWGFTNLKSGEGLQNIIAFIEEQGMLGK</sequence>
<feature type="chain" id="PRO_1000145174" description="Urease accessory protein UreG">
    <location>
        <begin position="1"/>
        <end position="205"/>
    </location>
</feature>
<feature type="binding site" evidence="1">
    <location>
        <begin position="14"/>
        <end position="21"/>
    </location>
    <ligand>
        <name>GTP</name>
        <dbReference type="ChEBI" id="CHEBI:37565"/>
    </ligand>
</feature>
<comment type="function">
    <text evidence="1">Facilitates the functional incorporation of the urease nickel metallocenter. This process requires GTP hydrolysis, probably effectuated by UreG.</text>
</comment>
<comment type="subunit">
    <text evidence="1">Homodimer. UreD, UreF and UreG form a complex that acts as a GTP-hydrolysis-dependent molecular chaperone, activating the urease apoprotein by helping to assemble the nickel containing metallocenter of UreC. The UreE protein probably delivers the nickel.</text>
</comment>
<comment type="subcellular location">
    <subcellularLocation>
        <location evidence="1">Cytoplasm</location>
    </subcellularLocation>
</comment>
<comment type="similarity">
    <text evidence="1">Belongs to the SIMIBI class G3E GTPase family. UreG subfamily.</text>
</comment>
<dbReference type="EMBL" id="CP001164">
    <property type="protein sequence ID" value="ACI37311.1"/>
    <property type="molecule type" value="Genomic_DNA"/>
</dbReference>
<dbReference type="RefSeq" id="WP_001021389.1">
    <property type="nucleotide sequence ID" value="NC_011353.1"/>
</dbReference>
<dbReference type="SMR" id="B5YUX6"/>
<dbReference type="KEGG" id="ecf:ECH74115_1326"/>
<dbReference type="HOGENOM" id="CLU_072144_1_0_6"/>
<dbReference type="GO" id="GO:0005737">
    <property type="term" value="C:cytoplasm"/>
    <property type="evidence" value="ECO:0007669"/>
    <property type="project" value="UniProtKB-SubCell"/>
</dbReference>
<dbReference type="GO" id="GO:0005525">
    <property type="term" value="F:GTP binding"/>
    <property type="evidence" value="ECO:0007669"/>
    <property type="project" value="UniProtKB-KW"/>
</dbReference>
<dbReference type="GO" id="GO:0003924">
    <property type="term" value="F:GTPase activity"/>
    <property type="evidence" value="ECO:0007669"/>
    <property type="project" value="InterPro"/>
</dbReference>
<dbReference type="GO" id="GO:0016151">
    <property type="term" value="F:nickel cation binding"/>
    <property type="evidence" value="ECO:0007669"/>
    <property type="project" value="UniProtKB-UniRule"/>
</dbReference>
<dbReference type="GO" id="GO:0043419">
    <property type="term" value="P:urea catabolic process"/>
    <property type="evidence" value="ECO:0007669"/>
    <property type="project" value="InterPro"/>
</dbReference>
<dbReference type="CDD" id="cd05540">
    <property type="entry name" value="UreG"/>
    <property type="match status" value="1"/>
</dbReference>
<dbReference type="FunFam" id="3.40.50.300:FF:000208">
    <property type="entry name" value="Urease accessory protein UreG"/>
    <property type="match status" value="1"/>
</dbReference>
<dbReference type="Gene3D" id="3.40.50.300">
    <property type="entry name" value="P-loop containing nucleotide triphosphate hydrolases"/>
    <property type="match status" value="1"/>
</dbReference>
<dbReference type="HAMAP" id="MF_01389">
    <property type="entry name" value="UreG"/>
    <property type="match status" value="1"/>
</dbReference>
<dbReference type="InterPro" id="IPR003495">
    <property type="entry name" value="CobW/HypB/UreG_nucleotide-bd"/>
</dbReference>
<dbReference type="InterPro" id="IPR027417">
    <property type="entry name" value="P-loop_NTPase"/>
</dbReference>
<dbReference type="InterPro" id="IPR004400">
    <property type="entry name" value="UreG"/>
</dbReference>
<dbReference type="NCBIfam" id="TIGR00101">
    <property type="entry name" value="ureG"/>
    <property type="match status" value="1"/>
</dbReference>
<dbReference type="PANTHER" id="PTHR31715">
    <property type="entry name" value="UREASE ACCESSORY PROTEIN G"/>
    <property type="match status" value="1"/>
</dbReference>
<dbReference type="PANTHER" id="PTHR31715:SF0">
    <property type="entry name" value="UREASE ACCESSORY PROTEIN G"/>
    <property type="match status" value="1"/>
</dbReference>
<dbReference type="Pfam" id="PF02492">
    <property type="entry name" value="cobW"/>
    <property type="match status" value="1"/>
</dbReference>
<dbReference type="PIRSF" id="PIRSF005624">
    <property type="entry name" value="Ni-bind_GTPase"/>
    <property type="match status" value="1"/>
</dbReference>
<dbReference type="SUPFAM" id="SSF52540">
    <property type="entry name" value="P-loop containing nucleoside triphosphate hydrolases"/>
    <property type="match status" value="1"/>
</dbReference>
<reference key="1">
    <citation type="journal article" date="2011" name="Proc. Natl. Acad. Sci. U.S.A.">
        <title>Genomic anatomy of Escherichia coli O157:H7 outbreaks.</title>
        <authorList>
            <person name="Eppinger M."/>
            <person name="Mammel M.K."/>
            <person name="Leclerc J.E."/>
            <person name="Ravel J."/>
            <person name="Cebula T.A."/>
        </authorList>
    </citation>
    <scope>NUCLEOTIDE SEQUENCE [LARGE SCALE GENOMIC DNA]</scope>
    <source>
        <strain>EC4115 / EHEC</strain>
    </source>
</reference>
<evidence type="ECO:0000255" key="1">
    <source>
        <dbReference type="HAMAP-Rule" id="MF_01389"/>
    </source>
</evidence>